<reference key="1">
    <citation type="journal article" date="2013" name="Toxins">
        <title>A proteomics and transcriptomics investigation of the venom from the barychelid spider Trittame loki (brush-foot trapdoor).</title>
        <authorList>
            <person name="Undheim E.A."/>
            <person name="Sunagar K."/>
            <person name="Herzig V."/>
            <person name="Kely L."/>
            <person name="Low D.H."/>
            <person name="Jackson T.N."/>
            <person name="Jones A."/>
            <person name="Kurniawan N."/>
            <person name="King G.F."/>
            <person name="Ali S.A."/>
            <person name="Antunes A."/>
            <person name="Ruder T."/>
            <person name="Fry B.G."/>
        </authorList>
    </citation>
    <scope>NUCLEOTIDE SEQUENCE [MRNA]</scope>
    <source>
        <tissue>Venom gland</tissue>
    </source>
</reference>
<proteinExistence type="evidence at transcript level"/>
<evidence type="ECO:0000250" key="1"/>
<evidence type="ECO:0000255" key="2"/>
<evidence type="ECO:0000303" key="3">
    <source>
    </source>
</evidence>
<evidence type="ECO:0000305" key="4"/>
<dbReference type="EMBL" id="GAQE01000039">
    <property type="protein sequence ID" value="JAB84515.1"/>
    <property type="molecule type" value="Transcribed_RNA"/>
</dbReference>
<dbReference type="ArachnoServer" id="AS001998">
    <property type="toxin name" value="U17-barytoxin-Tl1b"/>
</dbReference>
<dbReference type="GO" id="GO:0005576">
    <property type="term" value="C:extracellular region"/>
    <property type="evidence" value="ECO:0007669"/>
    <property type="project" value="UniProtKB-SubCell"/>
</dbReference>
<dbReference type="GO" id="GO:0019871">
    <property type="term" value="F:sodium channel inhibitor activity"/>
    <property type="evidence" value="ECO:0007669"/>
    <property type="project" value="InterPro"/>
</dbReference>
<dbReference type="GO" id="GO:0090729">
    <property type="term" value="F:toxin activity"/>
    <property type="evidence" value="ECO:0007669"/>
    <property type="project" value="UniProtKB-KW"/>
</dbReference>
<dbReference type="InterPro" id="IPR012627">
    <property type="entry name" value="Toxin_22"/>
</dbReference>
<dbReference type="Pfam" id="PF08092">
    <property type="entry name" value="Toxin_22"/>
    <property type="match status" value="1"/>
</dbReference>
<feature type="signal peptide" evidence="2">
    <location>
        <begin position="1"/>
        <end position="20"/>
    </location>
</feature>
<feature type="propeptide" id="PRO_0000435159" evidence="4">
    <location>
        <begin position="21"/>
        <end position="74"/>
    </location>
</feature>
<feature type="chain" id="PRO_0000429243" description="U17-barytoxin-Tl1b">
    <location>
        <begin position="75"/>
        <end position="115"/>
    </location>
</feature>
<feature type="disulfide bond" evidence="1">
    <location>
        <begin position="75"/>
        <end position="89"/>
    </location>
</feature>
<feature type="disulfide bond" evidence="1">
    <location>
        <begin position="82"/>
        <end position="94"/>
    </location>
</feature>
<feature type="disulfide bond" evidence="1">
    <location>
        <begin position="88"/>
        <end position="109"/>
    </location>
</feature>
<keyword id="KW-0165">Cleavage on pair of basic residues</keyword>
<keyword id="KW-1015">Disulfide bond</keyword>
<keyword id="KW-0872">Ion channel impairing toxin</keyword>
<keyword id="KW-0960">Knottin</keyword>
<keyword id="KW-0964">Secreted</keyword>
<keyword id="KW-0732">Signal</keyword>
<keyword id="KW-0800">Toxin</keyword>
<organism>
    <name type="scientific">Trittame loki</name>
    <name type="common">Brush-footed trapdoor spider</name>
    <dbReference type="NCBI Taxonomy" id="1295018"/>
    <lineage>
        <taxon>Eukaryota</taxon>
        <taxon>Metazoa</taxon>
        <taxon>Ecdysozoa</taxon>
        <taxon>Arthropoda</taxon>
        <taxon>Chelicerata</taxon>
        <taxon>Arachnida</taxon>
        <taxon>Araneae</taxon>
        <taxon>Mygalomorphae</taxon>
        <taxon>Barychelidae</taxon>
        <taxon>Trittame</taxon>
    </lineage>
</organism>
<comment type="function">
    <text evidence="4">Ion channel inhibitor.</text>
</comment>
<comment type="subcellular location">
    <subcellularLocation>
        <location evidence="1">Secreted</location>
    </subcellularLocation>
</comment>
<comment type="tissue specificity">
    <text>Expressed by the venom gland.</text>
</comment>
<comment type="domain">
    <text evidence="1">The presence of a 'disulfide through disulfide knot' structurally defines this protein as a knottin.</text>
</comment>
<comment type="similarity">
    <text evidence="4">Belongs to the neurotoxin 14 (magi-1) family. 03 (ICK-30-40) subfamily.</text>
</comment>
<accession>W4VRU5</accession>
<name>ICK36_TRILK</name>
<protein>
    <recommendedName>
        <fullName>U17-barytoxin-Tl1b</fullName>
        <shortName>U17-BATX-Tl1b</shortName>
    </recommendedName>
    <alternativeName>
        <fullName evidence="3">Toxin ICK-36</fullName>
    </alternativeName>
</protein>
<sequence>MKTIIVFLSLLVLATKFGDAKEGVNQKQKKEVTQNEFREEYLNEMAAMSLVQQLEAIERALFENEAGRNSRQKRCLGENVPCGDNIPCCGKLACEKTAGYGWWYKSPYCVKPTSG</sequence>